<evidence type="ECO:0000250" key="1">
    <source>
        <dbReference type="UniProtKB" id="Q40983"/>
    </source>
</evidence>
<evidence type="ECO:0000269" key="2">
    <source>
    </source>
</evidence>
<evidence type="ECO:0000269" key="3">
    <source>
    </source>
</evidence>
<evidence type="ECO:0000303" key="4">
    <source>
    </source>
</evidence>
<evidence type="ECO:0000303" key="5">
    <source ref="6"/>
</evidence>
<evidence type="ECO:0000305" key="6"/>
<evidence type="ECO:0000312" key="7">
    <source>
        <dbReference type="Araport" id="AT5G42390"/>
    </source>
</evidence>
<evidence type="ECO:0000312" key="8">
    <source>
        <dbReference type="EMBL" id="AAC39482.1"/>
    </source>
</evidence>
<evidence type="ECO:0000312" key="9">
    <source>
        <dbReference type="EMBL" id="BAB10480.1"/>
    </source>
</evidence>
<comment type="function">
    <text evidence="1 2">Cleaves presequences (transit peptides) from chloroplastic protein precursors (PubMed:12795700). Initially recognizes a precursor by binding to the C-terminus of its transit peptide and then removes the transit peptide in a single endoproteolytic step. In a next step, pursues the cleavage of transit peptide to a subfragment form (By similarity).</text>
</comment>
<comment type="cofactor">
    <cofactor evidence="1">
        <name>Zn(2+)</name>
        <dbReference type="ChEBI" id="CHEBI:29105"/>
    </cofactor>
    <text evidence="1">Binds 1 zinc ion per subunit.</text>
</comment>
<comment type="subcellular location">
    <subcellularLocation>
        <location evidence="1">Plastid</location>
        <location evidence="1">Chloroplast stroma</location>
    </subcellularLocation>
</comment>
<comment type="disruption phenotype">
    <text evidence="3">Embryo lethality.</text>
</comment>
<comment type="miscellaneous">
    <text evidence="2">RNAi plants were almost all seedling lethals. Surviving plants exhibited slower shoot and root growth, and grossly aberrant leaf morphology. They also displayed defects in chloroplast protein import.</text>
</comment>
<comment type="similarity">
    <text evidence="6">Belongs to the peptidase M16 family.</text>
</comment>
<keyword id="KW-0150">Chloroplast</keyword>
<keyword id="KW-0378">Hydrolase</keyword>
<keyword id="KW-0479">Metal-binding</keyword>
<keyword id="KW-0482">Metalloprotease</keyword>
<keyword id="KW-0934">Plastid</keyword>
<keyword id="KW-0645">Protease</keyword>
<keyword id="KW-1185">Reference proteome</keyword>
<keyword id="KW-0809">Transit peptide</keyword>
<keyword id="KW-0862">Zinc</keyword>
<proteinExistence type="evidence at transcript level"/>
<reference key="1">
    <citation type="journal article" date="1998" name="Proc. Natl. Acad. Sci. U.S.A.">
        <title>A chloroplast processing enzyme functions as the general stromal processing peptidase.</title>
        <authorList>
            <person name="Richter S."/>
            <person name="Lamppa G.K."/>
        </authorList>
    </citation>
    <scope>NUCLEOTIDE SEQUENCE [GENOMIC DNA]</scope>
    <source>
        <strain>cv. Columbia</strain>
    </source>
</reference>
<reference key="2">
    <citation type="journal article" date="1998" name="DNA Res.">
        <title>Structural analysis of Arabidopsis thaliana chromosome 5. VIII. Sequence features of the regions of 1,081,958 bp covered by seventeen physically assigned P1 and TAC clones.</title>
        <authorList>
            <person name="Asamizu E."/>
            <person name="Sato S."/>
            <person name="Kaneko T."/>
            <person name="Nakamura Y."/>
            <person name="Kotani H."/>
            <person name="Miyajima N."/>
            <person name="Tabata S."/>
        </authorList>
    </citation>
    <scope>NUCLEOTIDE SEQUENCE [LARGE SCALE GENOMIC DNA]</scope>
    <source>
        <strain>cv. Columbia</strain>
    </source>
</reference>
<reference key="3">
    <citation type="journal article" date="2017" name="Plant J.">
        <title>Araport11: a complete reannotation of the Arabidopsis thaliana reference genome.</title>
        <authorList>
            <person name="Cheng C.Y."/>
            <person name="Krishnakumar V."/>
            <person name="Chan A.P."/>
            <person name="Thibaud-Nissen F."/>
            <person name="Schobel S."/>
            <person name="Town C.D."/>
        </authorList>
    </citation>
    <scope>GENOME REANNOTATION</scope>
    <source>
        <strain>cv. Columbia</strain>
    </source>
</reference>
<reference key="4">
    <citation type="journal article" date="2003" name="Science">
        <title>Empirical analysis of transcriptional activity in the Arabidopsis genome.</title>
        <authorList>
            <person name="Yamada K."/>
            <person name="Lim J."/>
            <person name="Dale J.M."/>
            <person name="Chen H."/>
            <person name="Shinn P."/>
            <person name="Palm C.J."/>
            <person name="Southwick A.M."/>
            <person name="Wu H.C."/>
            <person name="Kim C.J."/>
            <person name="Nguyen M."/>
            <person name="Pham P.K."/>
            <person name="Cheuk R.F."/>
            <person name="Karlin-Newmann G."/>
            <person name="Liu S.X."/>
            <person name="Lam B."/>
            <person name="Sakano H."/>
            <person name="Wu T."/>
            <person name="Yu G."/>
            <person name="Miranda M."/>
            <person name="Quach H.L."/>
            <person name="Tripp M."/>
            <person name="Chang C.H."/>
            <person name="Lee J.M."/>
            <person name="Toriumi M.J."/>
            <person name="Chan M.M."/>
            <person name="Tang C.C."/>
            <person name="Onodera C.S."/>
            <person name="Deng J.M."/>
            <person name="Akiyama K."/>
            <person name="Ansari Y."/>
            <person name="Arakawa T."/>
            <person name="Banh J."/>
            <person name="Banno F."/>
            <person name="Bowser L."/>
            <person name="Brooks S.Y."/>
            <person name="Carninci P."/>
            <person name="Chao Q."/>
            <person name="Choy N."/>
            <person name="Enju A."/>
            <person name="Goldsmith A.D."/>
            <person name="Gurjal M."/>
            <person name="Hansen N.F."/>
            <person name="Hayashizaki Y."/>
            <person name="Johnson-Hopson C."/>
            <person name="Hsuan V.W."/>
            <person name="Iida K."/>
            <person name="Karnes M."/>
            <person name="Khan S."/>
            <person name="Koesema E."/>
            <person name="Ishida J."/>
            <person name="Jiang P.X."/>
            <person name="Jones T."/>
            <person name="Kawai J."/>
            <person name="Kamiya A."/>
            <person name="Meyers C."/>
            <person name="Nakajima M."/>
            <person name="Narusaka M."/>
            <person name="Seki M."/>
            <person name="Sakurai T."/>
            <person name="Satou M."/>
            <person name="Tamse R."/>
            <person name="Vaysberg M."/>
            <person name="Wallender E.K."/>
            <person name="Wong C."/>
            <person name="Yamamura Y."/>
            <person name="Yuan S."/>
            <person name="Shinozaki K."/>
            <person name="Davis R.W."/>
            <person name="Theologis A."/>
            <person name="Ecker J.R."/>
        </authorList>
    </citation>
    <scope>NUCLEOTIDE SEQUENCE [LARGE SCALE MRNA]</scope>
    <source>
        <strain>cv. Columbia</strain>
    </source>
</reference>
<reference key="5">
    <citation type="journal article" date="2003" name="Plant J.">
        <title>A pea antisense gene for the chloroplast stromal processing peptidase yields seedling lethals in Arabidopsis: survivors show defective GFP import in vivo.</title>
        <authorList>
            <person name="Zhong R."/>
            <person name="Wan J."/>
            <person name="Jin R."/>
            <person name="Lamppa G."/>
        </authorList>
    </citation>
    <scope>FUNCTION</scope>
</reference>
<reference key="6">
    <citation type="journal article" date="2006" name="Physiol. Plantarum">
        <title>Function of the stromal processing peptidase in the chloroplast import pathway.</title>
        <authorList>
            <person name="Richter S."/>
            <person name="Zhong R."/>
            <person name="Lamppa G.K."/>
        </authorList>
    </citation>
    <scope>REVIEW</scope>
</reference>
<reference key="7">
    <citation type="journal article" date="2011" name="PLoS ONE">
        <title>The stromal processing peptidase of chloroplasts is essential in Arabidopsis, with knockout mutations causing embryo arrest after the 16-cell stage.</title>
        <authorList>
            <person name="Troesch R."/>
            <person name="Jarvis P."/>
        </authorList>
    </citation>
    <scope>DISRUPTION PHENOTYPE</scope>
</reference>
<reference key="8">
    <citation type="journal article" date="2013" name="Biochim. Biophys. Acta">
        <title>Processing peptidases in mitochondria and chloroplasts.</title>
        <authorList>
            <person name="Teixeira P.F."/>
            <person name="Glaser E."/>
        </authorList>
    </citation>
    <scope>REVIEW</scope>
</reference>
<feature type="transit peptide" description="Chloroplast" evidence="4 5">
    <location>
        <begin position="1"/>
        <end position="143"/>
    </location>
</feature>
<feature type="chain" id="PRO_0000435733" description="Stromal processing peptidase, chloroplastic">
    <location>
        <begin position="144"/>
        <end position="1265"/>
    </location>
</feature>
<feature type="active site" description="Proton acceptor" evidence="6">
    <location>
        <position position="243"/>
    </location>
</feature>
<feature type="active site" evidence="6">
    <location>
        <position position="314"/>
    </location>
</feature>
<feature type="binding site" evidence="6">
    <location>
        <position position="240"/>
    </location>
    <ligand>
        <name>Zn(2+)</name>
        <dbReference type="ChEBI" id="CHEBI:29105"/>
    </ligand>
</feature>
<feature type="binding site" evidence="6">
    <location>
        <position position="244"/>
    </location>
    <ligand>
        <name>Zn(2+)</name>
        <dbReference type="ChEBI" id="CHEBI:29105"/>
    </ligand>
</feature>
<feature type="binding site" evidence="6">
    <location>
        <position position="321"/>
    </location>
    <ligand>
        <name>Zn(2+)</name>
        <dbReference type="ChEBI" id="CHEBI:29105"/>
    </ligand>
</feature>
<feature type="sequence conflict" description="In Ref. 1; AAC39482." evidence="6" ref="1">
    <original>P</original>
    <variation>L</variation>
    <location>
        <position position="673"/>
    </location>
</feature>
<feature type="sequence conflict" description="In Ref. 1; AAC39482." evidence="6" ref="1">
    <original>N</original>
    <variation>K</variation>
    <location>
        <position position="1110"/>
    </location>
</feature>
<feature type="sequence conflict" description="In Ref. 1; AAC39482." evidence="6" ref="1">
    <original>S</original>
    <variation>N</variation>
    <location>
        <position position="1134"/>
    </location>
</feature>
<feature type="sequence conflict" description="In Ref. 1; AAC39482." evidence="6" ref="1">
    <original>P</original>
    <variation>Q</variation>
    <location>
        <position position="1183"/>
    </location>
</feature>
<dbReference type="EC" id="3.4.24.-" evidence="1"/>
<dbReference type="EMBL" id="AF008444">
    <property type="protein sequence ID" value="AAC39482.1"/>
    <property type="molecule type" value="Genomic_DNA"/>
</dbReference>
<dbReference type="EMBL" id="AB016888">
    <property type="protein sequence ID" value="BAB10480.1"/>
    <property type="molecule type" value="Genomic_DNA"/>
</dbReference>
<dbReference type="EMBL" id="CP002688">
    <property type="protein sequence ID" value="AED94804.1"/>
    <property type="molecule type" value="Genomic_DNA"/>
</dbReference>
<dbReference type="EMBL" id="BT000785">
    <property type="protein sequence ID" value="AAN31924.1"/>
    <property type="molecule type" value="mRNA"/>
</dbReference>
<dbReference type="PIR" id="T03302">
    <property type="entry name" value="T03302"/>
</dbReference>
<dbReference type="RefSeq" id="NP_199054.1">
    <property type="nucleotide sequence ID" value="NM_123604.3"/>
</dbReference>
<dbReference type="SMR" id="Q9FIH8"/>
<dbReference type="FunCoup" id="Q9FIH8">
    <property type="interactions" value="1277"/>
</dbReference>
<dbReference type="IntAct" id="Q9FIH8">
    <property type="interactions" value="2"/>
</dbReference>
<dbReference type="STRING" id="3702.Q9FIH8"/>
<dbReference type="MEROPS" id="M16.004"/>
<dbReference type="GlyGen" id="Q9FIH8">
    <property type="glycosylation" value="1 site"/>
</dbReference>
<dbReference type="iPTMnet" id="Q9FIH8"/>
<dbReference type="PaxDb" id="3702-AT5G42390.1"/>
<dbReference type="ProteomicsDB" id="228456"/>
<dbReference type="EnsemblPlants" id="AT5G42390.1">
    <property type="protein sequence ID" value="AT5G42390.1"/>
    <property type="gene ID" value="AT5G42390"/>
</dbReference>
<dbReference type="GeneID" id="834245"/>
<dbReference type="Gramene" id="AT5G42390.1">
    <property type="protein sequence ID" value="AT5G42390.1"/>
    <property type="gene ID" value="AT5G42390"/>
</dbReference>
<dbReference type="KEGG" id="ath:AT5G42390"/>
<dbReference type="Araport" id="AT5G42390"/>
<dbReference type="TAIR" id="AT5G42390">
    <property type="gene designation" value="SPP"/>
</dbReference>
<dbReference type="eggNOG" id="KOG0959">
    <property type="taxonomic scope" value="Eukaryota"/>
</dbReference>
<dbReference type="HOGENOM" id="CLU_007907_0_0_1"/>
<dbReference type="InParanoid" id="Q9FIH8"/>
<dbReference type="OMA" id="ENVEIHC"/>
<dbReference type="PhylomeDB" id="Q9FIH8"/>
<dbReference type="BRENDA" id="3.4.21.102">
    <property type="organism ID" value="399"/>
</dbReference>
<dbReference type="PRO" id="PR:Q9FIH8"/>
<dbReference type="Proteomes" id="UP000006548">
    <property type="component" value="Chromosome 5"/>
</dbReference>
<dbReference type="ExpressionAtlas" id="Q9FIH8">
    <property type="expression patterns" value="baseline and differential"/>
</dbReference>
<dbReference type="GO" id="GO:0009507">
    <property type="term" value="C:chloroplast"/>
    <property type="evidence" value="ECO:0007005"/>
    <property type="project" value="TAIR"/>
</dbReference>
<dbReference type="GO" id="GO:0009570">
    <property type="term" value="C:chloroplast stroma"/>
    <property type="evidence" value="ECO:0007005"/>
    <property type="project" value="TAIR"/>
</dbReference>
<dbReference type="GO" id="GO:0005739">
    <property type="term" value="C:mitochondrion"/>
    <property type="evidence" value="ECO:0007005"/>
    <property type="project" value="TAIR"/>
</dbReference>
<dbReference type="GO" id="GO:0009536">
    <property type="term" value="C:plastid"/>
    <property type="evidence" value="ECO:0007005"/>
    <property type="project" value="TAIR"/>
</dbReference>
<dbReference type="GO" id="GO:0046872">
    <property type="term" value="F:metal ion binding"/>
    <property type="evidence" value="ECO:0007669"/>
    <property type="project" value="UniProtKB-KW"/>
</dbReference>
<dbReference type="GO" id="GO:0008237">
    <property type="term" value="F:metallopeptidase activity"/>
    <property type="evidence" value="ECO:0007669"/>
    <property type="project" value="UniProtKB-KW"/>
</dbReference>
<dbReference type="GO" id="GO:0003729">
    <property type="term" value="F:mRNA binding"/>
    <property type="evidence" value="ECO:0000314"/>
    <property type="project" value="TAIR"/>
</dbReference>
<dbReference type="GO" id="GO:0009793">
    <property type="term" value="P:embryo development ending in seed dormancy"/>
    <property type="evidence" value="ECO:0000315"/>
    <property type="project" value="TAIR"/>
</dbReference>
<dbReference type="GO" id="GO:0006508">
    <property type="term" value="P:proteolysis"/>
    <property type="evidence" value="ECO:0007669"/>
    <property type="project" value="UniProtKB-KW"/>
</dbReference>
<dbReference type="FunFam" id="3.30.830.10:FF:000025">
    <property type="entry name" value="Stromal processing peptidase chloroplastic"/>
    <property type="match status" value="1"/>
</dbReference>
<dbReference type="FunFam" id="3.30.830.10:FF:000033">
    <property type="entry name" value="Stromal processing peptidase, chloroplastic"/>
    <property type="match status" value="1"/>
</dbReference>
<dbReference type="FunFam" id="3.30.830.10:FF:000040">
    <property type="entry name" value="Stromal processing peptidase, chloroplastic"/>
    <property type="match status" value="1"/>
</dbReference>
<dbReference type="Gene3D" id="3.30.830.10">
    <property type="entry name" value="Metalloenzyme, LuxS/M16 peptidase-like"/>
    <property type="match status" value="4"/>
</dbReference>
<dbReference type="InterPro" id="IPR011249">
    <property type="entry name" value="Metalloenz_LuxS/M16"/>
</dbReference>
<dbReference type="InterPro" id="IPR011765">
    <property type="entry name" value="Pept_M16_N"/>
</dbReference>
<dbReference type="InterPro" id="IPR050626">
    <property type="entry name" value="Peptidase_M16"/>
</dbReference>
<dbReference type="InterPro" id="IPR007863">
    <property type="entry name" value="Peptidase_M16_C"/>
</dbReference>
<dbReference type="PANTHER" id="PTHR43690">
    <property type="entry name" value="NARDILYSIN"/>
    <property type="match status" value="1"/>
</dbReference>
<dbReference type="PANTHER" id="PTHR43690:SF33">
    <property type="entry name" value="STROMAL PROCESSING PEPTIDASE, CHLOROPLASTIC"/>
    <property type="match status" value="1"/>
</dbReference>
<dbReference type="Pfam" id="PF00675">
    <property type="entry name" value="Peptidase_M16"/>
    <property type="match status" value="1"/>
</dbReference>
<dbReference type="Pfam" id="PF05193">
    <property type="entry name" value="Peptidase_M16_C"/>
    <property type="match status" value="2"/>
</dbReference>
<dbReference type="SUPFAM" id="SSF63411">
    <property type="entry name" value="LuxS/MPP-like metallohydrolase"/>
    <property type="match status" value="3"/>
</dbReference>
<accession>Q9FIH8</accession>
<accession>O48870</accession>
<gene>
    <name evidence="6" type="primary">SPP</name>
    <name evidence="8" type="synonym">CPE</name>
    <name evidence="7" type="ordered locus">At5g42390</name>
    <name evidence="9" type="ORF">MDH9.8</name>
</gene>
<organism>
    <name type="scientific">Arabidopsis thaliana</name>
    <name type="common">Mouse-ear cress</name>
    <dbReference type="NCBI Taxonomy" id="3702"/>
    <lineage>
        <taxon>Eukaryota</taxon>
        <taxon>Viridiplantae</taxon>
        <taxon>Streptophyta</taxon>
        <taxon>Embryophyta</taxon>
        <taxon>Tracheophyta</taxon>
        <taxon>Spermatophyta</taxon>
        <taxon>Magnoliopsida</taxon>
        <taxon>eudicotyledons</taxon>
        <taxon>Gunneridae</taxon>
        <taxon>Pentapetalae</taxon>
        <taxon>rosids</taxon>
        <taxon>malvids</taxon>
        <taxon>Brassicales</taxon>
        <taxon>Brassicaceae</taxon>
        <taxon>Camelineae</taxon>
        <taxon>Arabidopsis</taxon>
    </lineage>
</organism>
<name>SPP_ARATH</name>
<sequence length="1265" mass="140607">MASSSSSIFTGVKFSPILAPFNSGDSRRSRYLKDSRNKVRFNPSSPRLTPHRVRVEAPSLIPYNGLWAAQPNSHKGRLKRNIVSGKEATGISLSQGRNFCLTCKRNQAGIRRALPSAFVDRTAFSLSRSSLTSSLRKHSQIVNATLGPDEPHAAGTAWPDGIVAERQDLDLLPPEIDSAELEAFLGCELPSHPKLHRGQLKNGLRYLILPNKVPPNRFEAHMEVHVGSIDEEEDEQGIAHMIEHVAFLGSKKREKLLGTGARSNAYTDFHHTVFHIHSPTHTKDSEDDLFPSVLDALNEIAFHPKFLSSRVEKERRAILSELQMMNTIEYRVDCQLLQHLHSENKLGRRFPIGLEEQIKKWDVDKIRKFHERWYFPANATLYIVGDIDNIPRIVHNIEAVFGKNGLDNESTPSSPSPGAFGAMANFLVPKLPAGLGGTFSNEKTNTADQSKMIKRERHAIRPPVEHNWSLPGTSVDLKPPQIFKHELLQNFAINMFCKIPVSKVQTFGDLRNVLMKRIFLSALHFRINTRYKSSNPPFTSVELDHSDSGREGCTVTTLTVTAEPQNWQNAVKVAVQEVRRLKEFGVTRGELTRYMDALLKDSEHLAAMIDNVSSVDNLDFIMESDALSHTVMDQTQGHETLVAVAGTVTLEEVNTVGAKVLEFISDFGRPTAPLPAAIVACVPTKVHVDGVGESDFNISPDEIIESVKSGLLAPIEAEPELEVPKELISQSQLKELTLQRNPCFVPIPGSGLTKLHDKETGITQLRLSNGIAVNYKKSTTESRAGVMRLIVGGGRAAETSDSKGAVVVGVRTLSEGGRVGDFSREQVELFCVNHLINCSLESTEEFIAMEFRFTLRDNGMQAAFQLLHMVLERSVWLEDAFDRARQLYLSYFRSIPKSLERATAHKLMIAMLNGDERFVEPTPKSLQSLNLESVKDAVMSHFVGDNMEVSIVGDFSEEEIERCILDYLGTVKASHDSAKPPGSEPILFRQPTAGLQFQQVFLKDTDERACAYIAGPAPNRWGFTVDGDDLFQSVSKLPVAHDGLLKSEEQLLEGGDRELQKKLRAHPLFFGVTMGLLAEIINSRLFTTVRDSLGLTYDVSFELNLFDRLNLGWYVISVTSTPGKVYKAVDACKSVLRGLHSNQIAPRELDRAKRTLLMRHEAELKSNAYWLNLLAHLQASSVPRKELSCIKELVSLYEAASIEDIYLAYNQLRVDEDSLYSCIGIAGAQAGEEITVLSEEEEPEDVFSGVVPVGRGSSMTTRPTT</sequence>
<protein>
    <recommendedName>
        <fullName evidence="6">Stromal processing peptidase, chloroplastic</fullName>
        <ecNumber evidence="1">3.4.24.-</ecNumber>
    </recommendedName>
    <alternativeName>
        <fullName evidence="8">Chloroplast processing enzyme</fullName>
    </alternativeName>
</protein>